<gene>
    <name evidence="1" type="primary">tsaC</name>
    <name type="synonym">rimN</name>
    <name type="ordered locus">SPA3269</name>
</gene>
<feature type="chain" id="PRO_0000352969" description="Threonylcarbamoyl-AMP synthase">
    <location>
        <begin position="1"/>
        <end position="190"/>
    </location>
</feature>
<feature type="domain" description="YrdC-like" evidence="1">
    <location>
        <begin position="7"/>
        <end position="190"/>
    </location>
</feature>
<evidence type="ECO:0000255" key="1">
    <source>
        <dbReference type="HAMAP-Rule" id="MF_01852"/>
    </source>
</evidence>
<sequence>MNNNLPTGSIAAVVDLLNKENVIAYPTEAVFGVGCDPDSETAVTRLLALKQRPVDKGLILIAASFEQLKPYIDDSILTAAQRKAVFDCWPGPVTFVFPAPATTPRWLTGRFDSLAVRVTNHPLVVALCNAYGKPLVSTSANLSGLPPCRTVEEVRAQFGDDFPVVEGATGGRLKPSEIRDALTGELFRQG</sequence>
<protein>
    <recommendedName>
        <fullName evidence="1">Threonylcarbamoyl-AMP synthase</fullName>
        <shortName evidence="1">TC-AMP synthase</shortName>
        <ecNumber evidence="1">2.7.7.87</ecNumber>
    </recommendedName>
    <alternativeName>
        <fullName evidence="1">L-threonylcarbamoyladenylate synthase</fullName>
    </alternativeName>
    <alternativeName>
        <fullName evidence="1">t(6)A37 threonylcarbamoyladenosine biosynthesis protein TsaC</fullName>
    </alternativeName>
    <alternativeName>
        <fullName evidence="1">tRNA threonylcarbamoyladenosine biosynthesis protein TsaC</fullName>
    </alternativeName>
</protein>
<organism>
    <name type="scientific">Salmonella paratyphi A (strain ATCC 9150 / SARB42)</name>
    <dbReference type="NCBI Taxonomy" id="295319"/>
    <lineage>
        <taxon>Bacteria</taxon>
        <taxon>Pseudomonadati</taxon>
        <taxon>Pseudomonadota</taxon>
        <taxon>Gammaproteobacteria</taxon>
        <taxon>Enterobacterales</taxon>
        <taxon>Enterobacteriaceae</taxon>
        <taxon>Salmonella</taxon>
    </lineage>
</organism>
<reference key="1">
    <citation type="journal article" date="2004" name="Nat. Genet.">
        <title>Comparison of genome degradation in Paratyphi A and Typhi, human-restricted serovars of Salmonella enterica that cause typhoid.</title>
        <authorList>
            <person name="McClelland M."/>
            <person name="Sanderson K.E."/>
            <person name="Clifton S.W."/>
            <person name="Latreille P."/>
            <person name="Porwollik S."/>
            <person name="Sabo A."/>
            <person name="Meyer R."/>
            <person name="Bieri T."/>
            <person name="Ozersky P."/>
            <person name="McLellan M."/>
            <person name="Harkins C.R."/>
            <person name="Wang C."/>
            <person name="Nguyen C."/>
            <person name="Berghoff A."/>
            <person name="Elliott G."/>
            <person name="Kohlberg S."/>
            <person name="Strong C."/>
            <person name="Du F."/>
            <person name="Carter J."/>
            <person name="Kremizki C."/>
            <person name="Layman D."/>
            <person name="Leonard S."/>
            <person name="Sun H."/>
            <person name="Fulton L."/>
            <person name="Nash W."/>
            <person name="Miner T."/>
            <person name="Minx P."/>
            <person name="Delehaunty K."/>
            <person name="Fronick C."/>
            <person name="Magrini V."/>
            <person name="Nhan M."/>
            <person name="Warren W."/>
            <person name="Florea L."/>
            <person name="Spieth J."/>
            <person name="Wilson R.K."/>
        </authorList>
    </citation>
    <scope>NUCLEOTIDE SEQUENCE [LARGE SCALE GENOMIC DNA]</scope>
    <source>
        <strain>ATCC 9150 / SARB42</strain>
    </source>
</reference>
<dbReference type="EC" id="2.7.7.87" evidence="1"/>
<dbReference type="EMBL" id="CP000026">
    <property type="protein sequence ID" value="AAV79085.1"/>
    <property type="molecule type" value="Genomic_DNA"/>
</dbReference>
<dbReference type="RefSeq" id="WP_001063618.1">
    <property type="nucleotide sequence ID" value="NC_006511.1"/>
</dbReference>
<dbReference type="SMR" id="Q5PIS8"/>
<dbReference type="KEGG" id="spt:SPA3269"/>
<dbReference type="HOGENOM" id="CLU_031397_6_0_6"/>
<dbReference type="Proteomes" id="UP000008185">
    <property type="component" value="Chromosome"/>
</dbReference>
<dbReference type="GO" id="GO:0005737">
    <property type="term" value="C:cytoplasm"/>
    <property type="evidence" value="ECO:0007669"/>
    <property type="project" value="UniProtKB-SubCell"/>
</dbReference>
<dbReference type="GO" id="GO:0005524">
    <property type="term" value="F:ATP binding"/>
    <property type="evidence" value="ECO:0007669"/>
    <property type="project" value="UniProtKB-UniRule"/>
</dbReference>
<dbReference type="GO" id="GO:0003725">
    <property type="term" value="F:double-stranded RNA binding"/>
    <property type="evidence" value="ECO:0007669"/>
    <property type="project" value="InterPro"/>
</dbReference>
<dbReference type="GO" id="GO:0061710">
    <property type="term" value="F:L-threonylcarbamoyladenylate synthase"/>
    <property type="evidence" value="ECO:0007669"/>
    <property type="project" value="UniProtKB-EC"/>
</dbReference>
<dbReference type="GO" id="GO:0000049">
    <property type="term" value="F:tRNA binding"/>
    <property type="evidence" value="ECO:0007669"/>
    <property type="project" value="TreeGrafter"/>
</dbReference>
<dbReference type="GO" id="GO:0006450">
    <property type="term" value="P:regulation of translational fidelity"/>
    <property type="evidence" value="ECO:0007669"/>
    <property type="project" value="TreeGrafter"/>
</dbReference>
<dbReference type="GO" id="GO:0002949">
    <property type="term" value="P:tRNA threonylcarbamoyladenosine modification"/>
    <property type="evidence" value="ECO:0007669"/>
    <property type="project" value="UniProtKB-UniRule"/>
</dbReference>
<dbReference type="FunFam" id="3.90.870.10:FF:000004">
    <property type="entry name" value="Threonylcarbamoyl-AMP synthase"/>
    <property type="match status" value="1"/>
</dbReference>
<dbReference type="Gene3D" id="3.90.870.10">
    <property type="entry name" value="DHBP synthase"/>
    <property type="match status" value="1"/>
</dbReference>
<dbReference type="HAMAP" id="MF_01852">
    <property type="entry name" value="TsaC"/>
    <property type="match status" value="1"/>
</dbReference>
<dbReference type="InterPro" id="IPR017945">
    <property type="entry name" value="DHBP_synth_RibB-like_a/b_dom"/>
</dbReference>
<dbReference type="InterPro" id="IPR006070">
    <property type="entry name" value="Sua5-like_dom"/>
</dbReference>
<dbReference type="InterPro" id="IPR023535">
    <property type="entry name" value="TC-AMP_synthase"/>
</dbReference>
<dbReference type="InterPro" id="IPR050156">
    <property type="entry name" value="TC-AMP_synthase_SUA5"/>
</dbReference>
<dbReference type="NCBIfam" id="NF007919">
    <property type="entry name" value="PRK10634.1"/>
    <property type="match status" value="1"/>
</dbReference>
<dbReference type="PANTHER" id="PTHR17490">
    <property type="entry name" value="SUA5"/>
    <property type="match status" value="1"/>
</dbReference>
<dbReference type="PANTHER" id="PTHR17490:SF18">
    <property type="entry name" value="THREONYLCARBAMOYL-AMP SYNTHASE"/>
    <property type="match status" value="1"/>
</dbReference>
<dbReference type="Pfam" id="PF01300">
    <property type="entry name" value="Sua5_yciO_yrdC"/>
    <property type="match status" value="1"/>
</dbReference>
<dbReference type="SUPFAM" id="SSF55821">
    <property type="entry name" value="YrdC/RibB"/>
    <property type="match status" value="1"/>
</dbReference>
<dbReference type="PROSITE" id="PS51163">
    <property type="entry name" value="YRDC"/>
    <property type="match status" value="1"/>
</dbReference>
<proteinExistence type="inferred from homology"/>
<accession>Q5PIS8</accession>
<comment type="function">
    <text evidence="1">Required for the formation of a threonylcarbamoyl group on adenosine at position 37 (t(6)A37) in tRNAs that read codons beginning with adenine. Catalyzes the conversion of L-threonine, HCO(3)(-)/CO(2) and ATP to give threonylcarbamoyl-AMP (TC-AMP) as the acyladenylate intermediate, with the release of diphosphate.</text>
</comment>
<comment type="catalytic activity">
    <reaction evidence="1">
        <text>L-threonine + hydrogencarbonate + ATP = L-threonylcarbamoyladenylate + diphosphate + H2O</text>
        <dbReference type="Rhea" id="RHEA:36407"/>
        <dbReference type="ChEBI" id="CHEBI:15377"/>
        <dbReference type="ChEBI" id="CHEBI:17544"/>
        <dbReference type="ChEBI" id="CHEBI:30616"/>
        <dbReference type="ChEBI" id="CHEBI:33019"/>
        <dbReference type="ChEBI" id="CHEBI:57926"/>
        <dbReference type="ChEBI" id="CHEBI:73682"/>
        <dbReference type="EC" id="2.7.7.87"/>
    </reaction>
</comment>
<comment type="subcellular location">
    <subcellularLocation>
        <location evidence="1">Cytoplasm</location>
    </subcellularLocation>
</comment>
<comment type="similarity">
    <text evidence="1">Belongs to the SUA5 family. TsaC subfamily.</text>
</comment>
<keyword id="KW-0067">ATP-binding</keyword>
<keyword id="KW-0963">Cytoplasm</keyword>
<keyword id="KW-0547">Nucleotide-binding</keyword>
<keyword id="KW-0548">Nucleotidyltransferase</keyword>
<keyword id="KW-0808">Transferase</keyword>
<keyword id="KW-0819">tRNA processing</keyword>
<name>TSAC_SALPA</name>